<name>CHST8_HUMAN</name>
<proteinExistence type="evidence at protein level"/>
<feature type="chain" id="PRO_0000189653" description="Carbohydrate sulfotransferase 8">
    <location>
        <begin position="1"/>
        <end position="424"/>
    </location>
</feature>
<feature type="topological domain" description="Cytoplasmic" evidence="2">
    <location>
        <begin position="1"/>
        <end position="10"/>
    </location>
</feature>
<feature type="transmembrane region" description="Helical; Signal-anchor for type II membrane protein" evidence="2">
    <location>
        <begin position="11"/>
        <end position="31"/>
    </location>
</feature>
<feature type="topological domain" description="Lumenal" evidence="2">
    <location>
        <begin position="32"/>
        <end position="424"/>
    </location>
</feature>
<feature type="region of interest" description="Disordered" evidence="3">
    <location>
        <begin position="47"/>
        <end position="107"/>
    </location>
</feature>
<feature type="compositionally biased region" description="Basic and acidic residues" evidence="3">
    <location>
        <begin position="66"/>
        <end position="77"/>
    </location>
</feature>
<feature type="binding site" evidence="1">
    <location>
        <begin position="198"/>
        <end position="204"/>
    </location>
    <ligand>
        <name>3'-phosphoadenylyl sulfate</name>
        <dbReference type="ChEBI" id="CHEBI:58339"/>
    </ligand>
</feature>
<feature type="binding site" evidence="1">
    <location>
        <begin position="258"/>
        <end position="266"/>
    </location>
    <ligand>
        <name>3'-phosphoadenylyl sulfate</name>
        <dbReference type="ChEBI" id="CHEBI:58339"/>
    </ligand>
</feature>
<feature type="glycosylation site" description="N-linked (GlcNAc...) asparagine" evidence="2">
    <location>
        <position position="128"/>
    </location>
</feature>
<feature type="glycosylation site" description="N-linked (GlcNAc...) asparagine" evidence="2">
    <location>
        <position position="294"/>
    </location>
</feature>
<feature type="glycosylation site" description="N-linked (GlcNAc...) asparagine" evidence="2">
    <location>
        <position position="367"/>
    </location>
</feature>
<feature type="glycosylation site" description="N-linked (GlcNAc...) asparagine" evidence="2">
    <location>
        <position position="415"/>
    </location>
</feature>
<feature type="sequence variant" id="VAR_067723" description="Found in a family showing features of non-inflammatory peeling skin syndrome segregating as a recessive trait; uncertain significance; results in decreased enzyme activity; the mutant protein shows reduced glycosylation; dbSNP:rs149660944." evidence="9">
    <original>R</original>
    <variation>W</variation>
    <location>
        <position position="77"/>
    </location>
</feature>
<feature type="sequence variant" id="VAR_036538" description="In a colorectal cancer sample; somatic mutation; dbSNP:rs1261984908." evidence="8">
    <original>R</original>
    <variation>H</variation>
    <location>
        <position position="247"/>
    </location>
</feature>
<feature type="sequence conflict" description="In Ref. 1; AAG39444." evidence="10" ref="1">
    <original>I</original>
    <variation>T</variation>
    <location>
        <position position="326"/>
    </location>
</feature>
<comment type="function">
    <text evidence="4 6">Catalyzes the transfer of sulfate to position 4 of non-reducing N-acetylgalactosamine (GalNAc) residues in both N-glycans and O-glycans. Required for biosynthesis of glycoprotein hormones lutropin and thyrotropin, by mediating sulfation of their carbohydrate structures. Only active against terminal GalNAcbeta1,GalNAcbeta. Not active toward chondroitin.</text>
</comment>
<comment type="biophysicochemical properties">
    <kinetics>
        <KM evidence="5">10 uM for carbonic anhydrase VI</KM>
    </kinetics>
    <phDependence>
        <text evidence="5">Optimum pH is 7.2.</text>
    </phDependence>
</comment>
<comment type="interaction">
    <interactant intactId="EBI-21642354">
        <id>Q9H2A9</id>
    </interactant>
    <interactant intactId="EBI-25837549">
        <id>P28329-3</id>
        <label>CHAT</label>
    </interactant>
    <organismsDiffer>false</organismsDiffer>
    <experiments>3</experiments>
</comment>
<comment type="interaction">
    <interactant intactId="EBI-21642354">
        <id>Q9H2A9</id>
    </interactant>
    <interactant intactId="EBI-348399">
        <id>P22607</id>
        <label>FGFR3</label>
    </interactant>
    <organismsDiffer>false</organismsDiffer>
    <experiments>3</experiments>
</comment>
<comment type="interaction">
    <interactant intactId="EBI-21642354">
        <id>Q9H2A9</id>
    </interactant>
    <interactant intactId="EBI-351506">
        <id>P06396</id>
        <label>GSN</label>
    </interactant>
    <organismsDiffer>false</organismsDiffer>
    <experiments>3</experiments>
</comment>
<comment type="subcellular location">
    <subcellularLocation>
        <location evidence="1">Golgi apparatus membrane</location>
        <topology evidence="1">Single-pass type II membrane protein</topology>
    </subcellularLocation>
</comment>
<comment type="tissue specificity">
    <text evidence="4 5 6 9">Predominantly expressed in pituitary gland. In brain, it is expressed in pituitary gland, cerebellum, medulla oblongata, pons, thalamus and spinal cord. Expressed in the epidermis. Expressed at lower level in lung, spleen, adrenal gland, placenta, prostate, testis, mammary gland and trachea.</text>
</comment>
<comment type="induction">
    <text evidence="7">Down-regulated (17-fold) in prion-infected cells.</text>
</comment>
<comment type="similarity">
    <text evidence="10">Belongs to the sulfotransferase 2 family.</text>
</comment>
<comment type="caution">
    <text evidence="10">PubMed:10988300 reports the possible existence of a secreted isoform starting at Met-119. However, they do not provide any experimental evidence.</text>
</comment>
<accession>Q9H2A9</accession>
<accession>Q9H3N2</accession>
<keyword id="KW-0119">Carbohydrate metabolism</keyword>
<keyword id="KW-0325">Glycoprotein</keyword>
<keyword id="KW-0333">Golgi apparatus</keyword>
<keyword id="KW-0472">Membrane</keyword>
<keyword id="KW-1267">Proteomics identification</keyword>
<keyword id="KW-1185">Reference proteome</keyword>
<keyword id="KW-0735">Signal-anchor</keyword>
<keyword id="KW-0808">Transferase</keyword>
<keyword id="KW-0812">Transmembrane</keyword>
<keyword id="KW-1133">Transmembrane helix</keyword>
<protein>
    <recommendedName>
        <fullName>Carbohydrate sulfotransferase 8</fullName>
        <ecNumber>2.8.2.-</ecNumber>
    </recommendedName>
    <alternativeName>
        <fullName>GalNAc-4-O-sulfotransferase 1</fullName>
        <shortName>GalNAc-4-ST1</shortName>
        <shortName>GalNAc4ST-1</shortName>
    </alternativeName>
    <alternativeName>
        <fullName>N-acetylgalactosamine-4-O-sulfotransferase 1</fullName>
    </alternativeName>
</protein>
<evidence type="ECO:0000250" key="1"/>
<evidence type="ECO:0000255" key="2"/>
<evidence type="ECO:0000256" key="3">
    <source>
        <dbReference type="SAM" id="MobiDB-lite"/>
    </source>
</evidence>
<evidence type="ECO:0000269" key="4">
    <source>
    </source>
</evidence>
<evidence type="ECO:0000269" key="5">
    <source>
    </source>
</evidence>
<evidence type="ECO:0000269" key="6">
    <source>
    </source>
</evidence>
<evidence type="ECO:0000269" key="7">
    <source>
    </source>
</evidence>
<evidence type="ECO:0000269" key="8">
    <source>
    </source>
</evidence>
<evidence type="ECO:0000269" key="9">
    <source>
    </source>
</evidence>
<evidence type="ECO:0000305" key="10"/>
<gene>
    <name type="primary">CHST8</name>
</gene>
<sequence length="424" mass="48834">MTLRPGTMRLACMFSSILLFGAAGLLLFISLQDPTELAPQQVPGIKFNIRPRQPHHDLPPGGSQDGDLKEPTERVTRDLSSGAPRGRNLPAPDQPQPPLQRGTRLRLRQRRRRLLIKKMPAAATIPANSSDAPFIRPGPGTLDGRWVSLHRSQQERKRVMQEACAKYRASSSRRAVTPRHVSRIFVEDRHRVLYCEVPKAGCSNWKRVLMVLAGLASSTADIQHNTVHYGSALKRLDTFDRQGILHRLSTYTKMLFVREPFERLVSAFRDKFEHPNSYYHPVFGKAILARYRANASREALRTGSGVRFPEFVQYLLDVHRPVGMDIHWDHVSRLCSPCLIDYDFVGKFESMEDDANFFLSLIRAPRNLTFPRFKDRHSQEARTTARIAHQYFAQLSALQRQRTYDFYYMDYLMFNYSKPFADLY</sequence>
<dbReference type="EC" id="2.8.2.-"/>
<dbReference type="EMBL" id="AF300612">
    <property type="protein sequence ID" value="AAG39444.1"/>
    <property type="molecule type" value="mRNA"/>
</dbReference>
<dbReference type="EMBL" id="AB047801">
    <property type="protein sequence ID" value="BAB19806.1"/>
    <property type="molecule type" value="mRNA"/>
</dbReference>
<dbReference type="EMBL" id="AF305781">
    <property type="protein sequence ID" value="AAL09373.1"/>
    <property type="molecule type" value="mRNA"/>
</dbReference>
<dbReference type="EMBL" id="BC011380">
    <property type="protein sequence ID" value="AAH11380.1"/>
    <property type="molecule type" value="mRNA"/>
</dbReference>
<dbReference type="EMBL" id="BC014250">
    <property type="protein sequence ID" value="AAH14250.1"/>
    <property type="molecule type" value="mRNA"/>
</dbReference>
<dbReference type="EMBL" id="BC018723">
    <property type="protein sequence ID" value="AAH18723.1"/>
    <property type="molecule type" value="mRNA"/>
</dbReference>
<dbReference type="CCDS" id="CCDS12433.1"/>
<dbReference type="RefSeq" id="NP_001121367.1">
    <property type="nucleotide sequence ID" value="NM_001127895.2"/>
</dbReference>
<dbReference type="RefSeq" id="NP_001121368.1">
    <property type="nucleotide sequence ID" value="NM_001127896.2"/>
</dbReference>
<dbReference type="RefSeq" id="NP_071912.2">
    <property type="nucleotide sequence ID" value="NM_022467.3"/>
</dbReference>
<dbReference type="RefSeq" id="XP_011525524.1">
    <property type="nucleotide sequence ID" value="XM_011527222.1"/>
</dbReference>
<dbReference type="RefSeq" id="XP_011525526.1">
    <property type="nucleotide sequence ID" value="XM_011527224.1"/>
</dbReference>
<dbReference type="RefSeq" id="XP_016882632.1">
    <property type="nucleotide sequence ID" value="XM_017027143.1"/>
</dbReference>
<dbReference type="RefSeq" id="XP_054177738.1">
    <property type="nucleotide sequence ID" value="XM_054321763.1"/>
</dbReference>
<dbReference type="RefSeq" id="XP_054177739.1">
    <property type="nucleotide sequence ID" value="XM_054321764.1"/>
</dbReference>
<dbReference type="RefSeq" id="XP_054177740.1">
    <property type="nucleotide sequence ID" value="XM_054321765.1"/>
</dbReference>
<dbReference type="BioGRID" id="122148">
    <property type="interactions" value="96"/>
</dbReference>
<dbReference type="FunCoup" id="Q9H2A9">
    <property type="interactions" value="241"/>
</dbReference>
<dbReference type="IntAct" id="Q9H2A9">
    <property type="interactions" value="80"/>
</dbReference>
<dbReference type="STRING" id="9606.ENSP00000262622"/>
<dbReference type="GlyCosmos" id="Q9H2A9">
    <property type="glycosylation" value="4 sites, No reported glycans"/>
</dbReference>
<dbReference type="GlyGen" id="Q9H2A9">
    <property type="glycosylation" value="9 sites, 1 O-linked glycan (4 sites)"/>
</dbReference>
<dbReference type="iPTMnet" id="Q9H2A9"/>
<dbReference type="PhosphoSitePlus" id="Q9H2A9"/>
<dbReference type="BioMuta" id="CHST8"/>
<dbReference type="DMDM" id="61212124"/>
<dbReference type="jPOST" id="Q9H2A9"/>
<dbReference type="MassIVE" id="Q9H2A9"/>
<dbReference type="PaxDb" id="9606-ENSP00000262622"/>
<dbReference type="PeptideAtlas" id="Q9H2A9"/>
<dbReference type="ProteomicsDB" id="80521"/>
<dbReference type="TopDownProteomics" id="Q9H2A9"/>
<dbReference type="Antibodypedia" id="2401">
    <property type="antibodies" value="137 antibodies from 27 providers"/>
</dbReference>
<dbReference type="DNASU" id="64377"/>
<dbReference type="Ensembl" id="ENST00000262622.4">
    <property type="protein sequence ID" value="ENSP00000262622.3"/>
    <property type="gene ID" value="ENSG00000124302.13"/>
</dbReference>
<dbReference type="Ensembl" id="ENST00000434302.5">
    <property type="protein sequence ID" value="ENSP00000392604.1"/>
    <property type="gene ID" value="ENSG00000124302.13"/>
</dbReference>
<dbReference type="Ensembl" id="ENST00000438847.7">
    <property type="protein sequence ID" value="ENSP00000393879.1"/>
    <property type="gene ID" value="ENSG00000124302.13"/>
</dbReference>
<dbReference type="Ensembl" id="ENST00000650847.1">
    <property type="protein sequence ID" value="ENSP00000499084.1"/>
    <property type="gene ID" value="ENSG00000124302.13"/>
</dbReference>
<dbReference type="GeneID" id="64377"/>
<dbReference type="KEGG" id="hsa:64377"/>
<dbReference type="MANE-Select" id="ENST00000650847.1">
    <property type="protein sequence ID" value="ENSP00000499084.1"/>
    <property type="RefSeq nucleotide sequence ID" value="NM_001127895.2"/>
    <property type="RefSeq protein sequence ID" value="NP_001121367.1"/>
</dbReference>
<dbReference type="UCSC" id="uc002nus.5">
    <property type="organism name" value="human"/>
</dbReference>
<dbReference type="AGR" id="HGNC:15993"/>
<dbReference type="CTD" id="64377"/>
<dbReference type="DisGeNET" id="64377"/>
<dbReference type="GeneCards" id="CHST8"/>
<dbReference type="HGNC" id="HGNC:15993">
    <property type="gene designation" value="CHST8"/>
</dbReference>
<dbReference type="HPA" id="ENSG00000124302">
    <property type="expression patterns" value="Group enriched (brain, pituitary gland)"/>
</dbReference>
<dbReference type="MalaCards" id="CHST8"/>
<dbReference type="MIM" id="610190">
    <property type="type" value="gene"/>
</dbReference>
<dbReference type="neXtProt" id="NX_Q9H2A9"/>
<dbReference type="OpenTargets" id="ENSG00000124302"/>
<dbReference type="Orphanet" id="263548">
    <property type="disease" value="Peeling skin syndrome type A"/>
</dbReference>
<dbReference type="PharmGKB" id="PA26508"/>
<dbReference type="VEuPathDB" id="HostDB:ENSG00000124302"/>
<dbReference type="eggNOG" id="KOG4651">
    <property type="taxonomic scope" value="Eukaryota"/>
</dbReference>
<dbReference type="GeneTree" id="ENSGT00940000159100"/>
<dbReference type="HOGENOM" id="CLU_043398_5_1_1"/>
<dbReference type="InParanoid" id="Q9H2A9"/>
<dbReference type="OMA" id="RHHVKHL"/>
<dbReference type="OrthoDB" id="2019940at2759"/>
<dbReference type="PAN-GO" id="Q9H2A9">
    <property type="GO annotations" value="2 GO annotations based on evolutionary models"/>
</dbReference>
<dbReference type="PhylomeDB" id="Q9H2A9"/>
<dbReference type="TreeFam" id="TF325581"/>
<dbReference type="PathwayCommons" id="Q9H2A9"/>
<dbReference type="Reactome" id="R-HSA-975578">
    <property type="pathway name" value="Reactions specific to the complex N-glycan synthesis pathway"/>
</dbReference>
<dbReference type="SABIO-RK" id="Q9H2A9"/>
<dbReference type="SignaLink" id="Q9H2A9"/>
<dbReference type="BioGRID-ORCS" id="64377">
    <property type="hits" value="37 hits in 1135 CRISPR screens"/>
</dbReference>
<dbReference type="ChiTaRS" id="CHST8">
    <property type="organism name" value="human"/>
</dbReference>
<dbReference type="GenomeRNAi" id="64377"/>
<dbReference type="Pharos" id="Q9H2A9">
    <property type="development level" value="Tbio"/>
</dbReference>
<dbReference type="PRO" id="PR:Q9H2A9"/>
<dbReference type="Proteomes" id="UP000005640">
    <property type="component" value="Chromosome 19"/>
</dbReference>
<dbReference type="RNAct" id="Q9H2A9">
    <property type="molecule type" value="protein"/>
</dbReference>
<dbReference type="Bgee" id="ENSG00000124302">
    <property type="expression patterns" value="Expressed in male germ line stem cell (sensu Vertebrata) in testis and 137 other cell types or tissues"/>
</dbReference>
<dbReference type="ExpressionAtlas" id="Q9H2A9">
    <property type="expression patterns" value="baseline and differential"/>
</dbReference>
<dbReference type="GO" id="GO:0000139">
    <property type="term" value="C:Golgi membrane"/>
    <property type="evidence" value="ECO:0000304"/>
    <property type="project" value="Reactome"/>
</dbReference>
<dbReference type="GO" id="GO:0016020">
    <property type="term" value="C:membrane"/>
    <property type="evidence" value="ECO:0000303"/>
    <property type="project" value="UniProtKB"/>
</dbReference>
<dbReference type="GO" id="GO:0001537">
    <property type="term" value="F:dermatan 4-sulfotransferase activity"/>
    <property type="evidence" value="ECO:0000314"/>
    <property type="project" value="UniProtKB"/>
</dbReference>
<dbReference type="GO" id="GO:0008146">
    <property type="term" value="F:sulfotransferase activity"/>
    <property type="evidence" value="ECO:0000318"/>
    <property type="project" value="GO_Central"/>
</dbReference>
<dbReference type="GO" id="GO:0016051">
    <property type="term" value="P:carbohydrate biosynthetic process"/>
    <property type="evidence" value="ECO:0007669"/>
    <property type="project" value="InterPro"/>
</dbReference>
<dbReference type="GO" id="GO:0007417">
    <property type="term" value="P:central nervous system development"/>
    <property type="evidence" value="ECO:0000303"/>
    <property type="project" value="UniProtKB"/>
</dbReference>
<dbReference type="GO" id="GO:0042446">
    <property type="term" value="P:hormone biosynthetic process"/>
    <property type="evidence" value="ECO:0000270"/>
    <property type="project" value="UniProtKB"/>
</dbReference>
<dbReference type="GO" id="GO:0030166">
    <property type="term" value="P:proteoglycan biosynthetic process"/>
    <property type="evidence" value="ECO:0000314"/>
    <property type="project" value="UniProtKB"/>
</dbReference>
<dbReference type="GO" id="GO:0006790">
    <property type="term" value="P:sulfur compound metabolic process"/>
    <property type="evidence" value="ECO:0000314"/>
    <property type="project" value="UniProtKB"/>
</dbReference>
<dbReference type="InterPro" id="IPR018011">
    <property type="entry name" value="Carb_sulfotrans_8-10"/>
</dbReference>
<dbReference type="InterPro" id="IPR005331">
    <property type="entry name" value="Sulfotransferase"/>
</dbReference>
<dbReference type="PANTHER" id="PTHR12137">
    <property type="entry name" value="CARBOHYDRATE SULFOTRANSFERASE"/>
    <property type="match status" value="1"/>
</dbReference>
<dbReference type="PANTHER" id="PTHR12137:SF7">
    <property type="entry name" value="CARBOHYDRATE SULFOTRANSFERASE 8"/>
    <property type="match status" value="1"/>
</dbReference>
<dbReference type="Pfam" id="PF03567">
    <property type="entry name" value="Sulfotransfer_2"/>
    <property type="match status" value="1"/>
</dbReference>
<organism>
    <name type="scientific">Homo sapiens</name>
    <name type="common">Human</name>
    <dbReference type="NCBI Taxonomy" id="9606"/>
    <lineage>
        <taxon>Eukaryota</taxon>
        <taxon>Metazoa</taxon>
        <taxon>Chordata</taxon>
        <taxon>Craniata</taxon>
        <taxon>Vertebrata</taxon>
        <taxon>Euteleostomi</taxon>
        <taxon>Mammalia</taxon>
        <taxon>Eutheria</taxon>
        <taxon>Euarchontoglires</taxon>
        <taxon>Primates</taxon>
        <taxon>Haplorrhini</taxon>
        <taxon>Catarrhini</taxon>
        <taxon>Hominidae</taxon>
        <taxon>Homo</taxon>
    </lineage>
</organism>
<reference key="1">
    <citation type="journal article" date="2000" name="J. Biol. Chem.">
        <title>Molecular cloning and expression of the pituitary glycoprotein hormone N-acetylgalactosamine-4-O-sulfotransferase.</title>
        <authorList>
            <person name="Xia G."/>
            <person name="Evers M.R."/>
            <person name="Kang H.-G."/>
            <person name="Schachner M."/>
            <person name="Baenziger J.U."/>
        </authorList>
    </citation>
    <scope>NUCLEOTIDE SEQUENCE [MRNA]</scope>
    <scope>ENZYME ACTIVITY</scope>
    <scope>FUNCTION</scope>
    <scope>TISSUE SPECIFICITY</scope>
    <source>
        <tissue>Fetal brain</tissue>
    </source>
</reference>
<reference key="2">
    <citation type="journal article" date="2000" name="J. Biol. Chem.">
        <title>Molecular cloning and characterization of GalNAc 4-sulfotransferase expressed in human pituitary gland.</title>
        <authorList>
            <person name="Okuda T."/>
            <person name="Mita S."/>
            <person name="Yamauchi S."/>
            <person name="Fukuta M."/>
            <person name="Nakano H."/>
            <person name="Sawada T."/>
            <person name="Habuchi O."/>
        </authorList>
    </citation>
    <scope>NUCLEOTIDE SEQUENCE [MRNA]</scope>
    <scope>ENZYME ACTIVITY</scope>
    <scope>TISSUE SPECIFICITY</scope>
    <scope>BIOPHYSICOCHEMICAL PROPERTIES</scope>
</reference>
<reference key="3">
    <citation type="journal article" date="2001" name="Glycobiology">
        <title>Molecular cloning and expression of two distinct human N-acetylgalactosamine 4-O-sulfotransferases that transfer sulfate to GalNAc beta 1-&gt;4GlcNAc beta 1-&gt;R in both N- and O-glycans.</title>
        <authorList>
            <person name="Hiraoka N."/>
            <person name="Misra A."/>
            <person name="Belot F."/>
            <person name="Hindsgaul O."/>
            <person name="Fukuda M."/>
        </authorList>
    </citation>
    <scope>NUCLEOTIDE SEQUENCE [MRNA]</scope>
    <scope>ENZYME ACTIVITY</scope>
    <scope>FUNCTION</scope>
    <scope>TISSUE SPECIFICITY</scope>
</reference>
<reference key="4">
    <citation type="journal article" date="2004" name="Genome Res.">
        <title>The status, quality, and expansion of the NIH full-length cDNA project: the Mammalian Gene Collection (MGC).</title>
        <authorList>
            <consortium name="The MGC Project Team"/>
        </authorList>
    </citation>
    <scope>NUCLEOTIDE SEQUENCE [LARGE SCALE MRNA]</scope>
    <source>
        <tissue>Muscle</tissue>
    </source>
</reference>
<reference key="5">
    <citation type="journal article" date="2005" name="J. Biol. Chem.">
        <title>Glycosylation-related gene expression in prion diseases: PrPSc accumulation in scrapie infected GT1 cells depends on beta-1,4-linked GalNAc-4-SO4 hyposulfation.</title>
        <authorList>
            <person name="Barret A."/>
            <person name="Forestier L."/>
            <person name="Deslys J.-P."/>
            <person name="Julien R."/>
            <person name="Gallet P.F."/>
        </authorList>
    </citation>
    <scope>INDUCTION</scope>
</reference>
<reference key="6">
    <citation type="journal article" date="2012" name="Genomics">
        <title>Whole-exome sequencing in a single proband reveals a mutation in the CHST8 gene in autosomal recessive peeling skin syndrome.</title>
        <authorList>
            <person name="Cabral R.M."/>
            <person name="Kurban M."/>
            <person name="Wajid M."/>
            <person name="Shimomura Y."/>
            <person name="Petukhova L."/>
            <person name="Christiano A.M."/>
        </authorList>
    </citation>
    <scope>TISSUE SPECIFICITY</scope>
    <scope>VARIANT TRP-77</scope>
    <scope>CHARACTERIZATION OF VARIANT TRP-77</scope>
</reference>
<reference key="7">
    <citation type="journal article" date="2006" name="Science">
        <title>The consensus coding sequences of human breast and colorectal cancers.</title>
        <authorList>
            <person name="Sjoeblom T."/>
            <person name="Jones S."/>
            <person name="Wood L.D."/>
            <person name="Parsons D.W."/>
            <person name="Lin J."/>
            <person name="Barber T.D."/>
            <person name="Mandelker D."/>
            <person name="Leary R.J."/>
            <person name="Ptak J."/>
            <person name="Silliman N."/>
            <person name="Szabo S."/>
            <person name="Buckhaults P."/>
            <person name="Farrell C."/>
            <person name="Meeh P."/>
            <person name="Markowitz S.D."/>
            <person name="Willis J."/>
            <person name="Dawson D."/>
            <person name="Willson J.K.V."/>
            <person name="Gazdar A.F."/>
            <person name="Hartigan J."/>
            <person name="Wu L."/>
            <person name="Liu C."/>
            <person name="Parmigiani G."/>
            <person name="Park B.H."/>
            <person name="Bachman K.E."/>
            <person name="Papadopoulos N."/>
            <person name="Vogelstein B."/>
            <person name="Kinzler K.W."/>
            <person name="Velculescu V.E."/>
        </authorList>
    </citation>
    <scope>VARIANT [LARGE SCALE ANALYSIS] HIS-247</scope>
</reference>